<dbReference type="EMBL" id="X83583">
    <property type="protein sequence ID" value="CAA58566.1"/>
    <property type="molecule type" value="mRNA"/>
</dbReference>
<dbReference type="EMBL" id="U21087">
    <property type="protein sequence ID" value="AAA87002.1"/>
    <property type="molecule type" value="mRNA"/>
</dbReference>
<dbReference type="PIR" id="S66266">
    <property type="entry name" value="S52852"/>
</dbReference>
<dbReference type="RefSeq" id="NP_037324.1">
    <property type="nucleotide sequence ID" value="NM_013192.2"/>
</dbReference>
<dbReference type="SMR" id="P48550"/>
<dbReference type="FunCoup" id="P48550">
    <property type="interactions" value="936"/>
</dbReference>
<dbReference type="STRING" id="10116.ENSRNOP00000059308"/>
<dbReference type="iPTMnet" id="P48550"/>
<dbReference type="PhosphoSitePlus" id="P48550"/>
<dbReference type="PaxDb" id="10116-ENSRNOP00000059308"/>
<dbReference type="GeneID" id="25743"/>
<dbReference type="KEGG" id="rno:25743"/>
<dbReference type="UCSC" id="RGD:2959">
    <property type="organism name" value="rat"/>
</dbReference>
<dbReference type="AGR" id="RGD:2959"/>
<dbReference type="CTD" id="3763"/>
<dbReference type="RGD" id="2959">
    <property type="gene designation" value="Kcnj6"/>
</dbReference>
<dbReference type="eggNOG" id="KOG3827">
    <property type="taxonomic scope" value="Eukaryota"/>
</dbReference>
<dbReference type="InParanoid" id="P48550"/>
<dbReference type="OrthoDB" id="273257at2759"/>
<dbReference type="PhylomeDB" id="P48550"/>
<dbReference type="Reactome" id="R-RNO-1296041">
    <property type="pathway name" value="Activation of G protein gated Potassium channels"/>
</dbReference>
<dbReference type="Reactome" id="R-RNO-997272">
    <property type="pathway name" value="Inhibition of voltage gated Ca2+ channels via Gbeta/gamma subunits"/>
</dbReference>
<dbReference type="PRO" id="PR:P48550"/>
<dbReference type="Proteomes" id="UP000002494">
    <property type="component" value="Unplaced"/>
</dbReference>
<dbReference type="GO" id="GO:0030424">
    <property type="term" value="C:axon"/>
    <property type="evidence" value="ECO:0000314"/>
    <property type="project" value="RGD"/>
</dbReference>
<dbReference type="GO" id="GO:0009986">
    <property type="term" value="C:cell surface"/>
    <property type="evidence" value="ECO:0000314"/>
    <property type="project" value="RGD"/>
</dbReference>
<dbReference type="GO" id="GO:0030425">
    <property type="term" value="C:dendrite"/>
    <property type="evidence" value="ECO:0000314"/>
    <property type="project" value="RGD"/>
</dbReference>
<dbReference type="GO" id="GO:0034702">
    <property type="term" value="C:monoatomic ion channel complex"/>
    <property type="evidence" value="ECO:0007669"/>
    <property type="project" value="UniProtKB-KW"/>
</dbReference>
<dbReference type="GO" id="GO:0032809">
    <property type="term" value="C:neuronal cell body membrane"/>
    <property type="evidence" value="ECO:0000314"/>
    <property type="project" value="RGD"/>
</dbReference>
<dbReference type="GO" id="GO:0098688">
    <property type="term" value="C:parallel fiber to Purkinje cell synapse"/>
    <property type="evidence" value="ECO:0000266"/>
    <property type="project" value="RGD"/>
</dbReference>
<dbReference type="GO" id="GO:0005886">
    <property type="term" value="C:plasma membrane"/>
    <property type="evidence" value="ECO:0000318"/>
    <property type="project" value="GO_Central"/>
</dbReference>
<dbReference type="GO" id="GO:0098794">
    <property type="term" value="C:postsynapse"/>
    <property type="evidence" value="ECO:0000266"/>
    <property type="project" value="RGD"/>
</dbReference>
<dbReference type="GO" id="GO:0098793">
    <property type="term" value="C:presynapse"/>
    <property type="evidence" value="ECO:0000266"/>
    <property type="project" value="RGD"/>
</dbReference>
<dbReference type="GO" id="GO:0042734">
    <property type="term" value="C:presynaptic membrane"/>
    <property type="evidence" value="ECO:0000266"/>
    <property type="project" value="RGD"/>
</dbReference>
<dbReference type="GO" id="GO:0015467">
    <property type="term" value="F:G-protein activated inward rectifier potassium channel activity"/>
    <property type="evidence" value="ECO:0000266"/>
    <property type="project" value="RGD"/>
</dbReference>
<dbReference type="GO" id="GO:0001965">
    <property type="term" value="F:G-protein alpha-subunit binding"/>
    <property type="evidence" value="ECO:0000314"/>
    <property type="project" value="RGD"/>
</dbReference>
<dbReference type="GO" id="GO:0005242">
    <property type="term" value="F:inward rectifier potassium channel activity"/>
    <property type="evidence" value="ECO:0000314"/>
    <property type="project" value="UniProtKB"/>
</dbReference>
<dbReference type="GO" id="GO:0005267">
    <property type="term" value="F:potassium channel activity"/>
    <property type="evidence" value="ECO:0000266"/>
    <property type="project" value="RGD"/>
</dbReference>
<dbReference type="GO" id="GO:0099508">
    <property type="term" value="F:voltage-gated monoatomic ion channel activity involved in regulation of presynaptic membrane potential"/>
    <property type="evidence" value="ECO:0000266"/>
    <property type="project" value="RGD"/>
</dbReference>
<dbReference type="GO" id="GO:0071315">
    <property type="term" value="P:cellular response to morphine"/>
    <property type="evidence" value="ECO:0000270"/>
    <property type="project" value="RGD"/>
</dbReference>
<dbReference type="GO" id="GO:1990573">
    <property type="term" value="P:potassium ion import across plasma membrane"/>
    <property type="evidence" value="ECO:0000318"/>
    <property type="project" value="GO_Central"/>
</dbReference>
<dbReference type="GO" id="GO:0034765">
    <property type="term" value="P:regulation of monoatomic ion transmembrane transport"/>
    <property type="evidence" value="ECO:0000318"/>
    <property type="project" value="GO_Central"/>
</dbReference>
<dbReference type="GO" id="GO:0051602">
    <property type="term" value="P:response to electrical stimulus"/>
    <property type="evidence" value="ECO:0000270"/>
    <property type="project" value="RGD"/>
</dbReference>
<dbReference type="GO" id="GO:0042403">
    <property type="term" value="P:thyroid hormone metabolic process"/>
    <property type="evidence" value="ECO:0000266"/>
    <property type="project" value="RGD"/>
</dbReference>
<dbReference type="FunFam" id="1.10.287.70:FF:000019">
    <property type="entry name" value="G protein-activated inward rectifier potassium channel 1"/>
    <property type="match status" value="1"/>
</dbReference>
<dbReference type="FunFam" id="2.60.40.1400:FF:000005">
    <property type="entry name" value="G protein-activated inward rectifier potassium channel 2"/>
    <property type="match status" value="1"/>
</dbReference>
<dbReference type="Gene3D" id="1.10.287.70">
    <property type="match status" value="1"/>
</dbReference>
<dbReference type="Gene3D" id="2.60.40.1400">
    <property type="entry name" value="G protein-activated inward rectifier potassium channel 1"/>
    <property type="match status" value="1"/>
</dbReference>
<dbReference type="InterPro" id="IPR014756">
    <property type="entry name" value="Ig_E-set"/>
</dbReference>
<dbReference type="InterPro" id="IPR041647">
    <property type="entry name" value="IRK_C"/>
</dbReference>
<dbReference type="InterPro" id="IPR016449">
    <property type="entry name" value="K_chnl_inward-rec_Kir"/>
</dbReference>
<dbReference type="InterPro" id="IPR003275">
    <property type="entry name" value="K_chnl_inward-rec_Kir3.2"/>
</dbReference>
<dbReference type="InterPro" id="IPR013518">
    <property type="entry name" value="K_chnl_inward-rec_Kir_cyto"/>
</dbReference>
<dbReference type="InterPro" id="IPR040445">
    <property type="entry name" value="Kir_TM"/>
</dbReference>
<dbReference type="PANTHER" id="PTHR11767:SF19">
    <property type="entry name" value="G PROTEIN-ACTIVATED INWARD RECTIFIER POTASSIUM CHANNEL 2"/>
    <property type="match status" value="1"/>
</dbReference>
<dbReference type="PANTHER" id="PTHR11767">
    <property type="entry name" value="INWARD RECTIFIER POTASSIUM CHANNEL"/>
    <property type="match status" value="1"/>
</dbReference>
<dbReference type="Pfam" id="PF01007">
    <property type="entry name" value="IRK"/>
    <property type="match status" value="1"/>
</dbReference>
<dbReference type="Pfam" id="PF17655">
    <property type="entry name" value="IRK_C"/>
    <property type="match status" value="1"/>
</dbReference>
<dbReference type="PIRSF" id="PIRSF005465">
    <property type="entry name" value="GIRK_kir"/>
    <property type="match status" value="1"/>
</dbReference>
<dbReference type="PRINTS" id="PR01328">
    <property type="entry name" value="KIR32CHANNEL"/>
</dbReference>
<dbReference type="PRINTS" id="PR01320">
    <property type="entry name" value="KIRCHANNEL"/>
</dbReference>
<dbReference type="SUPFAM" id="SSF81296">
    <property type="entry name" value="E set domains"/>
    <property type="match status" value="1"/>
</dbReference>
<dbReference type="SUPFAM" id="SSF81324">
    <property type="entry name" value="Voltage-gated potassium channels"/>
    <property type="match status" value="1"/>
</dbReference>
<proteinExistence type="evidence at protein level"/>
<comment type="function">
    <text evidence="7 8">Inward rectifier potassium channels are characterized by a greater tendency to allow potassium to flow into the cell rather than out of it. Their voltage dependence is regulated by the concentration of extracellular potassium; as external potassium is raised, the voltage range of the channel opening shifts to more positive voltages. The inward rectification is mainly due to the blockage of outward current by internal magnesium. This potassium channel may be involved in the regulation of insulin secretion by glucose and/or neurotransmitters acting through G-protein-coupled receptors.</text>
</comment>
<comment type="catalytic activity">
    <reaction evidence="7 8">
        <text>K(+)(in) = K(+)(out)</text>
        <dbReference type="Rhea" id="RHEA:29463"/>
        <dbReference type="ChEBI" id="CHEBI:29103"/>
    </reaction>
</comment>
<comment type="activity regulation">
    <text evidence="8">Activated by phosphatidylinositol 4,5 biphosphate (PtdIns(4,5)P2).</text>
</comment>
<comment type="subunit">
    <text evidence="2 6">Associates with KCNJ3/GIRK1 or KCNJ5/GRIK4 to form a G-protein-activated heteromultimer pore-forming unit. The resulting inward current is much larger (By similarity). Interacts (via PDZ-binding motif) with SNX27 (via PDZ domain); the interaction is required for recycling to the plasma membrane when endocytosed and prevent degradation in lysosomes (PubMed:17828261).</text>
</comment>
<comment type="subcellular location">
    <subcellularLocation>
        <location evidence="4">Membrane</location>
        <topology evidence="4">Multi-pass membrane protein</topology>
    </subcellularLocation>
</comment>
<comment type="tissue specificity">
    <text evidence="7">Pancreatic beta cells and brain.</text>
</comment>
<comment type="similarity">
    <text evidence="9">Belongs to the inward rectifier-type potassium channel (TC 1.A.2.1) family. KCNJ6 subfamily.</text>
</comment>
<sequence length="425" mass="48640">MTMAKLTESMTNVLEGDSMDQDVESPVAIHQPKLPKQARDDLPRHISRDRTKRKIQRYVRKDGKCNVHHGNVRETYRYLTDIFTTLVDLKWRFNLLIFVMVYTVTWLFFGMIWWLIAYIRGDMDHIEDPSWTPCVTNLNGFVSAFLFSIETETTIGYGYRVITDKCPEGIILLLIQSVLGSIVNAFMVGCMFVKISQPKKRAETLVFSTHAVISMRDGKLCLMFRVGDLRNSHIVEASIRAKLIKSKQTSEGEFIPLNQTDINVGYYTGDDRLFLVSPLIISHEINQQSPFWEISKAQLPKEELEIVVILEGMVEATGMTCQARSSYVTSEILWGYRFTPVLTLEDGFYEVDYNSFHETHETSTPSLSAKELAELANRAELPLSWSVSSKLNQHAELETEEEEKNPEELTERNGDVANLENESKV</sequence>
<keyword id="KW-0407">Ion channel</keyword>
<keyword id="KW-0406">Ion transport</keyword>
<keyword id="KW-0472">Membrane</keyword>
<keyword id="KW-0597">Phosphoprotein</keyword>
<keyword id="KW-0630">Potassium</keyword>
<keyword id="KW-0633">Potassium transport</keyword>
<keyword id="KW-1185">Reference proteome</keyword>
<keyword id="KW-0812">Transmembrane</keyword>
<keyword id="KW-1133">Transmembrane helix</keyword>
<keyword id="KW-0813">Transport</keyword>
<keyword id="KW-0851">Voltage-gated channel</keyword>
<protein>
    <recommendedName>
        <fullName>G protein-activated inward rectifier potassium channel 2</fullName>
        <shortName>GIRK-2</shortName>
    </recommendedName>
    <alternativeName>
        <fullName>BIR1</fullName>
    </alternativeName>
    <alternativeName>
        <fullName>Inward rectifier K(+) channel Kir3.2</fullName>
    </alternativeName>
    <alternativeName>
        <fullName>KATP-2</fullName>
    </alternativeName>
    <alternativeName>
        <fullName>Potassium channel, inwardly rectifying subfamily J member 6</fullName>
    </alternativeName>
</protein>
<gene>
    <name type="primary">Kcnj6</name>
    <name type="synonym">Girk2</name>
    <name type="synonym">Kcnj7</name>
</gene>
<feature type="chain" id="PRO_0000154946" description="G protein-activated inward rectifier potassium channel 2">
    <location>
        <begin position="1"/>
        <end position="425"/>
    </location>
</feature>
<feature type="topological domain" description="Cytoplasmic" evidence="1">
    <location>
        <begin position="1"/>
        <end position="91"/>
    </location>
</feature>
<feature type="transmembrane region" description="Helical; Name=M1" evidence="1">
    <location>
        <begin position="92"/>
        <end position="116"/>
    </location>
</feature>
<feature type="topological domain" description="Extracellular" evidence="1">
    <location>
        <begin position="117"/>
        <end position="140"/>
    </location>
</feature>
<feature type="intramembrane region" description="Helical; Pore-forming; Name=H5" evidence="1">
    <location>
        <begin position="141"/>
        <end position="152"/>
    </location>
</feature>
<feature type="intramembrane region" description="Pore-forming" evidence="1">
    <location>
        <begin position="153"/>
        <end position="159"/>
    </location>
</feature>
<feature type="topological domain" description="Extracellular" evidence="1">
    <location>
        <begin position="160"/>
        <end position="168"/>
    </location>
</feature>
<feature type="transmembrane region" description="Helical; Name=M2" evidence="1">
    <location>
        <begin position="169"/>
        <end position="190"/>
    </location>
</feature>
<feature type="topological domain" description="Cytoplasmic" evidence="1">
    <location>
        <begin position="191"/>
        <end position="425"/>
    </location>
</feature>
<feature type="region of interest" description="Disordered" evidence="5">
    <location>
        <begin position="392"/>
        <end position="425"/>
    </location>
</feature>
<feature type="short sequence motif" description="Selectivity filter" evidence="1">
    <location>
        <begin position="154"/>
        <end position="159"/>
    </location>
</feature>
<feature type="short sequence motif" description="PDZ-binding">
    <location>
        <begin position="422"/>
        <end position="425"/>
    </location>
</feature>
<feature type="site" description="Role in the control of polyamine-mediated channel gating and in the blocking by intracellular magnesium" evidence="1">
    <location>
        <position position="184"/>
    </location>
</feature>
<feature type="modified residue" description="Phosphoserine" evidence="3">
    <location>
        <position position="18"/>
    </location>
</feature>
<feature type="modified residue" description="Phosphoserine" evidence="3">
    <location>
        <position position="25"/>
    </location>
</feature>
<feature type="sequence conflict" description="In Ref. 2; AAA87002." evidence="9" ref="2">
    <original>V</original>
    <variation>I</variation>
    <location>
        <position position="328"/>
    </location>
</feature>
<feature type="sequence conflict" description="In Ref. 2; AAA87002." evidence="9" ref="2">
    <original>H</original>
    <variation>Y</variation>
    <location>
        <position position="360"/>
    </location>
</feature>
<reference key="1">
    <citation type="journal article" date="1995" name="FEBS Lett.">
        <title>Cloning and functional expression of the cDNA encoding an inwardly-rectifying potassium channel expressed in pancreatic beta-cells and in the brain.</title>
        <authorList>
            <person name="Bond C.T."/>
            <person name="Aemmaelae C."/>
            <person name="Ashfield R."/>
            <person name="Blair T.A."/>
            <person name="Gribble F."/>
            <person name="Khan R.N."/>
            <person name="Lee K."/>
            <person name="Proks P."/>
            <person name="Rowe I.C.M."/>
            <person name="Sakura H."/>
            <person name="Ashford M.J."/>
            <person name="Adelman J.P."/>
            <person name="Ashcroft F.M."/>
        </authorList>
    </citation>
    <scope>NUCLEOTIDE SEQUENCE [MRNA]</scope>
    <scope>FUNCTION</scope>
    <scope>TRANSPORTER ACTIVITY</scope>
    <scope>TISSUE SPECIFICITY</scope>
    <source>
        <strain>Sprague-Dawley</strain>
        <tissue>Brain</tissue>
    </source>
</reference>
<reference key="2">
    <citation type="journal article" date="1995" name="Biochem. Biophys. Res. Commun.">
        <title>Cloning of rat KATP-2 channel and decreased expression in pancreatic islets of male Zucker diabetic fatty rats.</title>
        <authorList>
            <person name="Stoffel M."/>
            <person name="Tokuyama Y."/>
            <person name="Trabb J.B."/>
            <person name="German M.S."/>
            <person name="Tsaar M.L."/>
            <person name="Jan L.Y."/>
            <person name="Polonsky K.S."/>
            <person name="Bell G.I."/>
        </authorList>
    </citation>
    <scope>NUCLEOTIDE SEQUENCE [MRNA]</scope>
</reference>
<reference key="3">
    <citation type="journal article" date="1998" name="Nature">
        <title>Direct activation of inward rectifier potassium channels by PIP2 and its stabilization by Gbetagamma.</title>
        <authorList>
            <person name="Huang C.L."/>
            <person name="Feng S."/>
            <person name="Hilgemann D.W."/>
        </authorList>
    </citation>
    <scope>FUNCTION</scope>
    <scope>TRANSPORTER ACTIVITY</scope>
    <scope>ACTIVITY REGULATION</scope>
</reference>
<reference key="4">
    <citation type="journal article" date="2007" name="Nat. Neurosci.">
        <title>A unique sorting nexin regulates trafficking of potassium channels via a PDZ domain interaction.</title>
        <authorList>
            <person name="Lunn M.L."/>
            <person name="Nassirpour R."/>
            <person name="Arrabit C."/>
            <person name="Tan J."/>
            <person name="McLeod I."/>
            <person name="Arias C.M."/>
            <person name="Sawchenko P.E."/>
            <person name="Yates J.R. III"/>
            <person name="Slesinger P.A."/>
        </authorList>
    </citation>
    <scope>INTERACTION WITH SNX27</scope>
</reference>
<organism>
    <name type="scientific">Rattus norvegicus</name>
    <name type="common">Rat</name>
    <dbReference type="NCBI Taxonomy" id="10116"/>
    <lineage>
        <taxon>Eukaryota</taxon>
        <taxon>Metazoa</taxon>
        <taxon>Chordata</taxon>
        <taxon>Craniata</taxon>
        <taxon>Vertebrata</taxon>
        <taxon>Euteleostomi</taxon>
        <taxon>Mammalia</taxon>
        <taxon>Eutheria</taxon>
        <taxon>Euarchontoglires</taxon>
        <taxon>Glires</taxon>
        <taxon>Rodentia</taxon>
        <taxon>Myomorpha</taxon>
        <taxon>Muroidea</taxon>
        <taxon>Muridae</taxon>
        <taxon>Murinae</taxon>
        <taxon>Rattus</taxon>
    </lineage>
</organism>
<accession>P48550</accession>
<name>KCNJ6_RAT</name>
<evidence type="ECO:0000250" key="1"/>
<evidence type="ECO:0000250" key="2">
    <source>
        <dbReference type="UniProtKB" id="P48051"/>
    </source>
</evidence>
<evidence type="ECO:0000250" key="3">
    <source>
        <dbReference type="UniProtKB" id="P48542"/>
    </source>
</evidence>
<evidence type="ECO:0000255" key="4"/>
<evidence type="ECO:0000256" key="5">
    <source>
        <dbReference type="SAM" id="MobiDB-lite"/>
    </source>
</evidence>
<evidence type="ECO:0000269" key="6">
    <source>
    </source>
</evidence>
<evidence type="ECO:0000269" key="7">
    <source>
    </source>
</evidence>
<evidence type="ECO:0000269" key="8">
    <source>
    </source>
</evidence>
<evidence type="ECO:0000305" key="9"/>